<feature type="chain" id="PRO_0000273819" description="Large ribosomal subunit protein uL30">
    <location>
        <begin position="1"/>
        <end position="61"/>
    </location>
</feature>
<protein>
    <recommendedName>
        <fullName evidence="1">Large ribosomal subunit protein uL30</fullName>
    </recommendedName>
    <alternativeName>
        <fullName evidence="2">50S ribosomal protein L30</fullName>
    </alternativeName>
</protein>
<organism>
    <name type="scientific">Chlorobium luteolum (strain DSM 273 / BCRC 81028 / 2530)</name>
    <name type="common">Pelodictyon luteolum</name>
    <dbReference type="NCBI Taxonomy" id="319225"/>
    <lineage>
        <taxon>Bacteria</taxon>
        <taxon>Pseudomonadati</taxon>
        <taxon>Chlorobiota</taxon>
        <taxon>Chlorobiia</taxon>
        <taxon>Chlorobiales</taxon>
        <taxon>Chlorobiaceae</taxon>
        <taxon>Chlorobium/Pelodictyon group</taxon>
        <taxon>Pelodictyon</taxon>
    </lineage>
</organism>
<dbReference type="EMBL" id="CP000096">
    <property type="protein sequence ID" value="ABB23087.1"/>
    <property type="molecule type" value="Genomic_DNA"/>
</dbReference>
<dbReference type="RefSeq" id="WP_011356963.1">
    <property type="nucleotide sequence ID" value="NC_007512.1"/>
</dbReference>
<dbReference type="SMR" id="Q3B6E4"/>
<dbReference type="STRING" id="319225.Plut_0199"/>
<dbReference type="KEGG" id="plt:Plut_0199"/>
<dbReference type="eggNOG" id="COG1841">
    <property type="taxonomic scope" value="Bacteria"/>
</dbReference>
<dbReference type="HOGENOM" id="CLU_131047_2_0_10"/>
<dbReference type="OrthoDB" id="9812790at2"/>
<dbReference type="Proteomes" id="UP000002709">
    <property type="component" value="Chromosome"/>
</dbReference>
<dbReference type="GO" id="GO:0022625">
    <property type="term" value="C:cytosolic large ribosomal subunit"/>
    <property type="evidence" value="ECO:0007669"/>
    <property type="project" value="TreeGrafter"/>
</dbReference>
<dbReference type="GO" id="GO:0003735">
    <property type="term" value="F:structural constituent of ribosome"/>
    <property type="evidence" value="ECO:0007669"/>
    <property type="project" value="InterPro"/>
</dbReference>
<dbReference type="GO" id="GO:0006412">
    <property type="term" value="P:translation"/>
    <property type="evidence" value="ECO:0007669"/>
    <property type="project" value="UniProtKB-UniRule"/>
</dbReference>
<dbReference type="CDD" id="cd01658">
    <property type="entry name" value="Ribosomal_L30"/>
    <property type="match status" value="1"/>
</dbReference>
<dbReference type="FunFam" id="3.30.1390.20:FF:000001">
    <property type="entry name" value="50S ribosomal protein L30"/>
    <property type="match status" value="1"/>
</dbReference>
<dbReference type="Gene3D" id="3.30.1390.20">
    <property type="entry name" value="Ribosomal protein L30, ferredoxin-like fold domain"/>
    <property type="match status" value="1"/>
</dbReference>
<dbReference type="HAMAP" id="MF_01371_B">
    <property type="entry name" value="Ribosomal_uL30_B"/>
    <property type="match status" value="1"/>
</dbReference>
<dbReference type="InterPro" id="IPR036919">
    <property type="entry name" value="Ribo_uL30_ferredoxin-like_sf"/>
</dbReference>
<dbReference type="InterPro" id="IPR005996">
    <property type="entry name" value="Ribosomal_uL30_bac-type"/>
</dbReference>
<dbReference type="InterPro" id="IPR016082">
    <property type="entry name" value="Ribosomal_uL30_ferredoxin-like"/>
</dbReference>
<dbReference type="NCBIfam" id="TIGR01308">
    <property type="entry name" value="rpmD_bact"/>
    <property type="match status" value="1"/>
</dbReference>
<dbReference type="PANTHER" id="PTHR15892:SF2">
    <property type="entry name" value="LARGE RIBOSOMAL SUBUNIT PROTEIN UL30M"/>
    <property type="match status" value="1"/>
</dbReference>
<dbReference type="PANTHER" id="PTHR15892">
    <property type="entry name" value="MITOCHONDRIAL RIBOSOMAL PROTEIN L30"/>
    <property type="match status" value="1"/>
</dbReference>
<dbReference type="Pfam" id="PF00327">
    <property type="entry name" value="Ribosomal_L30"/>
    <property type="match status" value="1"/>
</dbReference>
<dbReference type="PIRSF" id="PIRSF002211">
    <property type="entry name" value="Ribosomal_L30_bac-type"/>
    <property type="match status" value="1"/>
</dbReference>
<dbReference type="SUPFAM" id="SSF55129">
    <property type="entry name" value="Ribosomal protein L30p/L7e"/>
    <property type="match status" value="1"/>
</dbReference>
<keyword id="KW-1185">Reference proteome</keyword>
<keyword id="KW-0687">Ribonucleoprotein</keyword>
<keyword id="KW-0689">Ribosomal protein</keyword>
<proteinExistence type="inferred from homology"/>
<comment type="subunit">
    <text evidence="1">Part of the 50S ribosomal subunit.</text>
</comment>
<comment type="similarity">
    <text evidence="1">Belongs to the universal ribosomal protein uL30 family.</text>
</comment>
<gene>
    <name evidence="1" type="primary">rpmD</name>
    <name type="ordered locus">Plut_0199</name>
</gene>
<name>RL30_CHLL3</name>
<reference key="1">
    <citation type="submission" date="2005-08" db="EMBL/GenBank/DDBJ databases">
        <title>Complete sequence of Pelodictyon luteolum DSM 273.</title>
        <authorList>
            <consortium name="US DOE Joint Genome Institute"/>
            <person name="Copeland A."/>
            <person name="Lucas S."/>
            <person name="Lapidus A."/>
            <person name="Barry K."/>
            <person name="Detter J.C."/>
            <person name="Glavina T."/>
            <person name="Hammon N."/>
            <person name="Israni S."/>
            <person name="Pitluck S."/>
            <person name="Bryant D."/>
            <person name="Schmutz J."/>
            <person name="Larimer F."/>
            <person name="Land M."/>
            <person name="Kyrpides N."/>
            <person name="Ivanova N."/>
            <person name="Richardson P."/>
        </authorList>
    </citation>
    <scope>NUCLEOTIDE SEQUENCE [LARGE SCALE GENOMIC DNA]</scope>
    <source>
        <strain>DSM 273 / BCRC 81028 / 2530</strain>
    </source>
</reference>
<accession>Q3B6E4</accession>
<evidence type="ECO:0000255" key="1">
    <source>
        <dbReference type="HAMAP-Rule" id="MF_01371"/>
    </source>
</evidence>
<evidence type="ECO:0000305" key="2"/>
<sequence>MSDKKLKITQVRSIIGGTKKQKATIQALGLGRPHYTVERKDNPCTRGQIRVVQHLVKVEEV</sequence>